<feature type="chain" id="PRO_0000344125" description="Urease accessory protein UreF">
    <location>
        <begin position="1"/>
        <end position="222"/>
    </location>
</feature>
<evidence type="ECO:0000255" key="1">
    <source>
        <dbReference type="HAMAP-Rule" id="MF_01385"/>
    </source>
</evidence>
<dbReference type="EMBL" id="CP000155">
    <property type="protein sequence ID" value="ABC31225.1"/>
    <property type="molecule type" value="Genomic_DNA"/>
</dbReference>
<dbReference type="RefSeq" id="WP_011398292.1">
    <property type="nucleotide sequence ID" value="NC_007645.1"/>
</dbReference>
<dbReference type="SMR" id="Q2SDP9"/>
<dbReference type="STRING" id="349521.HCH_04525"/>
<dbReference type="KEGG" id="hch:HCH_04525"/>
<dbReference type="eggNOG" id="COG0830">
    <property type="taxonomic scope" value="Bacteria"/>
</dbReference>
<dbReference type="HOGENOM" id="CLU_049215_2_1_6"/>
<dbReference type="OrthoDB" id="9798772at2"/>
<dbReference type="Proteomes" id="UP000000238">
    <property type="component" value="Chromosome"/>
</dbReference>
<dbReference type="GO" id="GO:0005737">
    <property type="term" value="C:cytoplasm"/>
    <property type="evidence" value="ECO:0007669"/>
    <property type="project" value="UniProtKB-SubCell"/>
</dbReference>
<dbReference type="GO" id="GO:0016151">
    <property type="term" value="F:nickel cation binding"/>
    <property type="evidence" value="ECO:0007669"/>
    <property type="project" value="UniProtKB-UniRule"/>
</dbReference>
<dbReference type="Gene3D" id="1.10.4190.10">
    <property type="entry name" value="Urease accessory protein UreF"/>
    <property type="match status" value="1"/>
</dbReference>
<dbReference type="HAMAP" id="MF_01385">
    <property type="entry name" value="UreF"/>
    <property type="match status" value="1"/>
</dbReference>
<dbReference type="InterPro" id="IPR002639">
    <property type="entry name" value="UreF"/>
</dbReference>
<dbReference type="InterPro" id="IPR038277">
    <property type="entry name" value="UreF_sf"/>
</dbReference>
<dbReference type="PANTHER" id="PTHR33620">
    <property type="entry name" value="UREASE ACCESSORY PROTEIN F"/>
    <property type="match status" value="1"/>
</dbReference>
<dbReference type="PANTHER" id="PTHR33620:SF1">
    <property type="entry name" value="UREASE ACCESSORY PROTEIN F"/>
    <property type="match status" value="1"/>
</dbReference>
<dbReference type="Pfam" id="PF01730">
    <property type="entry name" value="UreF"/>
    <property type="match status" value="1"/>
</dbReference>
<dbReference type="PIRSF" id="PIRSF009467">
    <property type="entry name" value="Ureas_acces_UreF"/>
    <property type="match status" value="1"/>
</dbReference>
<accession>Q2SDP9</accession>
<comment type="function">
    <text evidence="1">Required for maturation of urease via the functional incorporation of the urease nickel metallocenter.</text>
</comment>
<comment type="subunit">
    <text evidence="1">UreD, UreF and UreG form a complex that acts as a GTP-hydrolysis-dependent molecular chaperone, activating the urease apoprotein by helping to assemble the nickel containing metallocenter of UreC. The UreE protein probably delivers the nickel.</text>
</comment>
<comment type="subcellular location">
    <subcellularLocation>
        <location evidence="1">Cytoplasm</location>
    </subcellularLocation>
</comment>
<comment type="similarity">
    <text evidence="1">Belongs to the UreF family.</text>
</comment>
<protein>
    <recommendedName>
        <fullName evidence="1">Urease accessory protein UreF</fullName>
    </recommendedName>
</protein>
<gene>
    <name evidence="1" type="primary">ureF</name>
    <name type="ordered locus">HCH_04525</name>
</gene>
<reference key="1">
    <citation type="journal article" date="2005" name="Nucleic Acids Res.">
        <title>Genomic blueprint of Hahella chejuensis, a marine microbe producing an algicidal agent.</title>
        <authorList>
            <person name="Jeong H."/>
            <person name="Yim J.H."/>
            <person name="Lee C."/>
            <person name="Choi S.-H."/>
            <person name="Park Y.K."/>
            <person name="Yoon S.H."/>
            <person name="Hur C.-G."/>
            <person name="Kang H.-Y."/>
            <person name="Kim D."/>
            <person name="Lee H.H."/>
            <person name="Park K.H."/>
            <person name="Park S.-H."/>
            <person name="Park H.-S."/>
            <person name="Lee H.K."/>
            <person name="Oh T.K."/>
            <person name="Kim J.F."/>
        </authorList>
    </citation>
    <scope>NUCLEOTIDE SEQUENCE [LARGE SCALE GENOMIC DNA]</scope>
    <source>
        <strain>KCTC 2396</strain>
    </source>
</reference>
<keyword id="KW-0143">Chaperone</keyword>
<keyword id="KW-0963">Cytoplasm</keyword>
<keyword id="KW-0996">Nickel insertion</keyword>
<keyword id="KW-1185">Reference proteome</keyword>
<proteinExistence type="inferred from homology"/>
<organism>
    <name type="scientific">Hahella chejuensis (strain KCTC 2396)</name>
    <dbReference type="NCBI Taxonomy" id="349521"/>
    <lineage>
        <taxon>Bacteria</taxon>
        <taxon>Pseudomonadati</taxon>
        <taxon>Pseudomonadota</taxon>
        <taxon>Gammaproteobacteria</taxon>
        <taxon>Oceanospirillales</taxon>
        <taxon>Hahellaceae</taxon>
        <taxon>Hahella</taxon>
    </lineage>
</organism>
<sequence>MPPLALLKLMNLISPALPVGAFAYSQGLEWAIDHGGIDTPEKIHDWLQGVISQGLGKTDLPVLFKLLQAWGANDHEQINSWNAWLLAARETQELLDEDRHVGKALAKLLRDLNVPGAEPWLERPASLLTLWTLACAHWDIDAESAALGFLWSWLENQIAVAGKTLPLAQTAAQRILQRLMPVLTETVAAATQIKEEDFGASLPGWAMACANHETQYSRLFRS</sequence>
<name>UREF_HAHCH</name>